<comment type="function">
    <text evidence="3 4 5">Small GTP-binding protein which cycles between an inactive GDP-bound and an active GTP-bound form, and the rate of cycling is regulated by guanine nucleotide exchange factors (GEF) and GTPase-activating proteins (GAP). GTP-binding protein that does not act as an allosteric activator of the cholera toxin catalytic subunit. May be involved in transport between a perinuclear compartment and the plasma membrane, apparently linked to the ABCA1-mediated cholesterol secretion pathway. Recruits CYTH1, CYTH2, CYTH3 and CYTH4 to the plasma membrane in the GDP-bound form. Regulates the microtubule-dependent intracellular vesicular transport from early endosome to recycling endosome process.</text>
</comment>
<comment type="subunit">
    <text evidence="4 5">Interacts with CYTH2. Interacts with alpha tubulin; interaction is independent on the ARL4C GTP or GDP binding status.</text>
</comment>
<comment type="subcellular location">
    <subcellularLocation>
        <location>Cell projection</location>
        <location>Filopodium</location>
    </subcellularLocation>
    <subcellularLocation>
        <location>Cell membrane</location>
    </subcellularLocation>
    <subcellularLocation>
        <location>Cytoplasm</location>
    </subcellularLocation>
</comment>
<comment type="alternative products">
    <event type="alternative splicing"/>
    <isoform>
        <id>P56559-1</id>
        <name>1</name>
        <sequence type="displayed"/>
    </isoform>
    <isoform>
        <id>P56559-2</id>
        <name>2</name>
        <sequence type="described" ref="VSP_055120"/>
    </isoform>
</comment>
<comment type="tissue specificity">
    <text evidence="5">Expressed in several tumor cell lines (at protein level). Expressed in lung, brain, leukocytes and placenta.</text>
</comment>
<comment type="induction">
    <text evidence="3">By liver X-receptor/retinoid X receptor agonists or cholesterol loading.</text>
</comment>
<comment type="similarity">
    <text evidence="7">Belongs to the small GTPase superfamily. Arf family.</text>
</comment>
<comment type="sequence caution" evidence="7">
    <conflict type="erroneous initiation">
        <sequence resource="EMBL-CDS" id="BAA75473"/>
    </conflict>
    <text>Truncated N-terminus.</text>
</comment>
<feature type="initiator methionine" description="Removed" evidence="2">
    <location>
        <position position="1"/>
    </location>
</feature>
<feature type="chain" id="PRO_0000207462" description="ADP-ribosylation factor-like protein 4C">
    <location>
        <begin position="2"/>
        <end position="192"/>
    </location>
</feature>
<feature type="binding site" evidence="1">
    <location>
        <begin position="20"/>
        <end position="27"/>
    </location>
    <ligand>
        <name>GTP</name>
        <dbReference type="ChEBI" id="CHEBI:37565"/>
    </ligand>
</feature>
<feature type="binding site" evidence="1">
    <location>
        <begin position="68"/>
        <end position="72"/>
    </location>
    <ligand>
        <name>GTP</name>
        <dbReference type="ChEBI" id="CHEBI:37565"/>
    </ligand>
</feature>
<feature type="binding site" evidence="1">
    <location>
        <begin position="127"/>
        <end position="130"/>
    </location>
    <ligand>
        <name>GTP</name>
        <dbReference type="ChEBI" id="CHEBI:37565"/>
    </ligand>
</feature>
<feature type="lipid moiety-binding region" description="N-myristoyl glycine" evidence="2">
    <location>
        <position position="2"/>
    </location>
</feature>
<feature type="splice variant" id="VSP_055120" description="In isoform 2." evidence="6">
    <original>R</original>
    <variation>RTGDLRSCEV</variation>
    <location>
        <position position="192"/>
    </location>
</feature>
<feature type="mutagenesis site" description="Cytoplasmic localization." evidence="3 4">
    <original>G</original>
    <variation>A</variation>
    <location>
        <position position="2"/>
    </location>
</feature>
<feature type="mutagenesis site" description="Does not interact with alpha tubulin." evidence="5">
    <original>T</original>
    <variation>N</variation>
    <location>
        <position position="27"/>
    </location>
</feature>
<feature type="mutagenesis site" description="Cytoplasmic localization. Increases GDP-form." evidence="4">
    <original>K</original>
    <variation>N</variation>
    <location>
        <position position="34"/>
    </location>
</feature>
<feature type="mutagenesis site" description="Does not interact with alpha tubulin. Activates transferrin transport from early endosome to recycling endosome." evidence="5">
    <original>Q</original>
    <variation>L</variation>
    <location>
        <position position="72"/>
    </location>
</feature>
<accession>P56559</accession>
<accession>Q4A519</accession>
<accession>Q53R10</accession>
<accession>Q9BVN1</accession>
<accession>Q9UQ34</accession>
<evidence type="ECO:0000250" key="1"/>
<evidence type="ECO:0000255" key="2"/>
<evidence type="ECO:0000269" key="3">
    <source>
    </source>
</evidence>
<evidence type="ECO:0000269" key="4">
    <source>
    </source>
</evidence>
<evidence type="ECO:0000269" key="5">
    <source>
    </source>
</evidence>
<evidence type="ECO:0000303" key="6">
    <source>
    </source>
</evidence>
<evidence type="ECO:0000305" key="7"/>
<sequence length="192" mass="21487">MGNISSNISAFQSLHIVMLGLDSAGKTTVLYRLKFNEFVNTVPTIGFNTEKIKLSNGTAKGISCHFWDVGGQEKLRPLWKSYSRCTDGIIYVVDSVDVDRLEEAKTELHKVTKFAENQGTPLLVIANKQDLPKSLPVAEIEKQLALHELIPATTYHVQPACAIIGEGLTEGMDKLYEMILKRRKSLKQKKKR</sequence>
<reference key="1">
    <citation type="journal article" date="1999" name="FEBS Lett.">
        <title>ADP-ribosylation factor (ARF)-like 4, 6, and 7 represent a subgroup of the ARF family characterization by rapid nucleotide exchange and a nuclear localization signal.</title>
        <authorList>
            <person name="Jacobs S."/>
            <person name="Schilf C."/>
            <person name="Fliegert F."/>
            <person name="Koling S."/>
            <person name="Weber Y."/>
            <person name="Schurmann A."/>
            <person name="Joost H.-G."/>
        </authorList>
    </citation>
    <scope>NUCLEOTIDE SEQUENCE [MRNA] (ISOFORM 1)</scope>
    <source>
        <tissue>Testis</tissue>
    </source>
</reference>
<reference key="2">
    <citation type="journal article" date="2004" name="FEBS Lett.">
        <title>ADP-ribosylation factor (ARF)-like 7 (ARL7) is induced by cholesterol loading and participates in apolipoprotein AI-dependent cholesterol export.</title>
        <authorList>
            <person name="Engel T."/>
            <person name="Lueken A."/>
            <person name="Bode G."/>
            <person name="Hobohm U."/>
            <person name="Lorkowski S."/>
            <person name="Schlueter B."/>
            <person name="Rust S."/>
            <person name="Cullen P."/>
            <person name="Pech M."/>
            <person name="Assmann G."/>
            <person name="Seedorf U."/>
        </authorList>
    </citation>
    <scope>NUCLEOTIDE SEQUENCE [MRNA] (ISOFORMS 1 AND 2)</scope>
    <scope>FUNCTION</scope>
    <scope>INDUCTION</scope>
    <scope>MUTAGENESIS OF GLY-2</scope>
    <scope>SUBCELLULAR LOCATION</scope>
</reference>
<reference key="3">
    <citation type="submission" date="2002-03" db="EMBL/GenBank/DDBJ databases">
        <title>cDNA clones of human proteins involved in signal transduction sequenced by the Guthrie cDNA resource center (www.cdna.org).</title>
        <authorList>
            <person name="Puhl H.L. III"/>
            <person name="Ikeda S.R."/>
            <person name="Aronstam R.S."/>
        </authorList>
    </citation>
    <scope>NUCLEOTIDE SEQUENCE [LARGE SCALE MRNA] (ISOFORM 1)</scope>
    <source>
        <tissue>Brain</tissue>
    </source>
</reference>
<reference key="4">
    <citation type="submission" date="2003-05" db="EMBL/GenBank/DDBJ databases">
        <title>Cloning of human full-length CDSs in BD Creator(TM) system donor vector.</title>
        <authorList>
            <person name="Kalnine N."/>
            <person name="Chen X."/>
            <person name="Rolfs A."/>
            <person name="Halleck A."/>
            <person name="Hines L."/>
            <person name="Eisenstein S."/>
            <person name="Koundinya M."/>
            <person name="Raphael J."/>
            <person name="Moreira D."/>
            <person name="Kelley T."/>
            <person name="LaBaer J."/>
            <person name="Lin Y."/>
            <person name="Phelan M."/>
            <person name="Farmer A."/>
        </authorList>
    </citation>
    <scope>NUCLEOTIDE SEQUENCE [LARGE SCALE MRNA] (ISOFORM 1)</scope>
</reference>
<reference key="5">
    <citation type="journal article" date="2004" name="Nat. Genet.">
        <title>Complete sequencing and characterization of 21,243 full-length human cDNAs.</title>
        <authorList>
            <person name="Ota T."/>
            <person name="Suzuki Y."/>
            <person name="Nishikawa T."/>
            <person name="Otsuki T."/>
            <person name="Sugiyama T."/>
            <person name="Irie R."/>
            <person name="Wakamatsu A."/>
            <person name="Hayashi K."/>
            <person name="Sato H."/>
            <person name="Nagai K."/>
            <person name="Kimura K."/>
            <person name="Makita H."/>
            <person name="Sekine M."/>
            <person name="Obayashi M."/>
            <person name="Nishi T."/>
            <person name="Shibahara T."/>
            <person name="Tanaka T."/>
            <person name="Ishii S."/>
            <person name="Yamamoto J."/>
            <person name="Saito K."/>
            <person name="Kawai Y."/>
            <person name="Isono Y."/>
            <person name="Nakamura Y."/>
            <person name="Nagahari K."/>
            <person name="Murakami K."/>
            <person name="Yasuda T."/>
            <person name="Iwayanagi T."/>
            <person name="Wagatsuma M."/>
            <person name="Shiratori A."/>
            <person name="Sudo H."/>
            <person name="Hosoiri T."/>
            <person name="Kaku Y."/>
            <person name="Kodaira H."/>
            <person name="Kondo H."/>
            <person name="Sugawara M."/>
            <person name="Takahashi M."/>
            <person name="Kanda K."/>
            <person name="Yokoi T."/>
            <person name="Furuya T."/>
            <person name="Kikkawa E."/>
            <person name="Omura Y."/>
            <person name="Abe K."/>
            <person name="Kamihara K."/>
            <person name="Katsuta N."/>
            <person name="Sato K."/>
            <person name="Tanikawa M."/>
            <person name="Yamazaki M."/>
            <person name="Ninomiya K."/>
            <person name="Ishibashi T."/>
            <person name="Yamashita H."/>
            <person name="Murakawa K."/>
            <person name="Fujimori K."/>
            <person name="Tanai H."/>
            <person name="Kimata M."/>
            <person name="Watanabe M."/>
            <person name="Hiraoka S."/>
            <person name="Chiba Y."/>
            <person name="Ishida S."/>
            <person name="Ono Y."/>
            <person name="Takiguchi S."/>
            <person name="Watanabe S."/>
            <person name="Yosida M."/>
            <person name="Hotuta T."/>
            <person name="Kusano J."/>
            <person name="Kanehori K."/>
            <person name="Takahashi-Fujii A."/>
            <person name="Hara H."/>
            <person name="Tanase T.-O."/>
            <person name="Nomura Y."/>
            <person name="Togiya S."/>
            <person name="Komai F."/>
            <person name="Hara R."/>
            <person name="Takeuchi K."/>
            <person name="Arita M."/>
            <person name="Imose N."/>
            <person name="Musashino K."/>
            <person name="Yuuki H."/>
            <person name="Oshima A."/>
            <person name="Sasaki N."/>
            <person name="Aotsuka S."/>
            <person name="Yoshikawa Y."/>
            <person name="Matsunawa H."/>
            <person name="Ichihara T."/>
            <person name="Shiohata N."/>
            <person name="Sano S."/>
            <person name="Moriya S."/>
            <person name="Momiyama H."/>
            <person name="Satoh N."/>
            <person name="Takami S."/>
            <person name="Terashima Y."/>
            <person name="Suzuki O."/>
            <person name="Nakagawa S."/>
            <person name="Senoh A."/>
            <person name="Mizoguchi H."/>
            <person name="Goto Y."/>
            <person name="Shimizu F."/>
            <person name="Wakebe H."/>
            <person name="Hishigaki H."/>
            <person name="Watanabe T."/>
            <person name="Sugiyama A."/>
            <person name="Takemoto M."/>
            <person name="Kawakami B."/>
            <person name="Yamazaki M."/>
            <person name="Watanabe K."/>
            <person name="Kumagai A."/>
            <person name="Itakura S."/>
            <person name="Fukuzumi Y."/>
            <person name="Fujimori Y."/>
            <person name="Komiyama M."/>
            <person name="Tashiro H."/>
            <person name="Tanigami A."/>
            <person name="Fujiwara T."/>
            <person name="Ono T."/>
            <person name="Yamada K."/>
            <person name="Fujii Y."/>
            <person name="Ozaki K."/>
            <person name="Hirao M."/>
            <person name="Ohmori Y."/>
            <person name="Kawabata A."/>
            <person name="Hikiji T."/>
            <person name="Kobatake N."/>
            <person name="Inagaki H."/>
            <person name="Ikema Y."/>
            <person name="Okamoto S."/>
            <person name="Okitani R."/>
            <person name="Kawakami T."/>
            <person name="Noguchi S."/>
            <person name="Itoh T."/>
            <person name="Shigeta K."/>
            <person name="Senba T."/>
            <person name="Matsumura K."/>
            <person name="Nakajima Y."/>
            <person name="Mizuno T."/>
            <person name="Morinaga M."/>
            <person name="Sasaki M."/>
            <person name="Togashi T."/>
            <person name="Oyama M."/>
            <person name="Hata H."/>
            <person name="Watanabe M."/>
            <person name="Komatsu T."/>
            <person name="Mizushima-Sugano J."/>
            <person name="Satoh T."/>
            <person name="Shirai Y."/>
            <person name="Takahashi Y."/>
            <person name="Nakagawa K."/>
            <person name="Okumura K."/>
            <person name="Nagase T."/>
            <person name="Nomura N."/>
            <person name="Kikuchi H."/>
            <person name="Masuho Y."/>
            <person name="Yamashita R."/>
            <person name="Nakai K."/>
            <person name="Yada T."/>
            <person name="Nakamura Y."/>
            <person name="Ohara O."/>
            <person name="Isogai T."/>
            <person name="Sugano S."/>
        </authorList>
    </citation>
    <scope>NUCLEOTIDE SEQUENCE [LARGE SCALE MRNA] (ISOFORM 1)</scope>
    <source>
        <tissue>Brain</tissue>
    </source>
</reference>
<reference key="6">
    <citation type="journal article" date="2005" name="Nature">
        <title>Generation and annotation of the DNA sequences of human chromosomes 2 and 4.</title>
        <authorList>
            <person name="Hillier L.W."/>
            <person name="Graves T.A."/>
            <person name="Fulton R.S."/>
            <person name="Fulton L.A."/>
            <person name="Pepin K.H."/>
            <person name="Minx P."/>
            <person name="Wagner-McPherson C."/>
            <person name="Layman D."/>
            <person name="Wylie K."/>
            <person name="Sekhon M."/>
            <person name="Becker M.C."/>
            <person name="Fewell G.A."/>
            <person name="Delehaunty K.D."/>
            <person name="Miner T.L."/>
            <person name="Nash W.E."/>
            <person name="Kremitzki C."/>
            <person name="Oddy L."/>
            <person name="Du H."/>
            <person name="Sun H."/>
            <person name="Bradshaw-Cordum H."/>
            <person name="Ali J."/>
            <person name="Carter J."/>
            <person name="Cordes M."/>
            <person name="Harris A."/>
            <person name="Isak A."/>
            <person name="van Brunt A."/>
            <person name="Nguyen C."/>
            <person name="Du F."/>
            <person name="Courtney L."/>
            <person name="Kalicki J."/>
            <person name="Ozersky P."/>
            <person name="Abbott S."/>
            <person name="Armstrong J."/>
            <person name="Belter E.A."/>
            <person name="Caruso L."/>
            <person name="Cedroni M."/>
            <person name="Cotton M."/>
            <person name="Davidson T."/>
            <person name="Desai A."/>
            <person name="Elliott G."/>
            <person name="Erb T."/>
            <person name="Fronick C."/>
            <person name="Gaige T."/>
            <person name="Haakenson W."/>
            <person name="Haglund K."/>
            <person name="Holmes A."/>
            <person name="Harkins R."/>
            <person name="Kim K."/>
            <person name="Kruchowski S.S."/>
            <person name="Strong C.M."/>
            <person name="Grewal N."/>
            <person name="Goyea E."/>
            <person name="Hou S."/>
            <person name="Levy A."/>
            <person name="Martinka S."/>
            <person name="Mead K."/>
            <person name="McLellan M.D."/>
            <person name="Meyer R."/>
            <person name="Randall-Maher J."/>
            <person name="Tomlinson C."/>
            <person name="Dauphin-Kohlberg S."/>
            <person name="Kozlowicz-Reilly A."/>
            <person name="Shah N."/>
            <person name="Swearengen-Shahid S."/>
            <person name="Snider J."/>
            <person name="Strong J.T."/>
            <person name="Thompson J."/>
            <person name="Yoakum M."/>
            <person name="Leonard S."/>
            <person name="Pearman C."/>
            <person name="Trani L."/>
            <person name="Radionenko M."/>
            <person name="Waligorski J.E."/>
            <person name="Wang C."/>
            <person name="Rock S.M."/>
            <person name="Tin-Wollam A.-M."/>
            <person name="Maupin R."/>
            <person name="Latreille P."/>
            <person name="Wendl M.C."/>
            <person name="Yang S.-P."/>
            <person name="Pohl C."/>
            <person name="Wallis J.W."/>
            <person name="Spieth J."/>
            <person name="Bieri T.A."/>
            <person name="Berkowicz N."/>
            <person name="Nelson J.O."/>
            <person name="Osborne J."/>
            <person name="Ding L."/>
            <person name="Meyer R."/>
            <person name="Sabo A."/>
            <person name="Shotland Y."/>
            <person name="Sinha P."/>
            <person name="Wohldmann P.E."/>
            <person name="Cook L.L."/>
            <person name="Hickenbotham M.T."/>
            <person name="Eldred J."/>
            <person name="Williams D."/>
            <person name="Jones T.A."/>
            <person name="She X."/>
            <person name="Ciccarelli F.D."/>
            <person name="Izaurralde E."/>
            <person name="Taylor J."/>
            <person name="Schmutz J."/>
            <person name="Myers R.M."/>
            <person name="Cox D.R."/>
            <person name="Huang X."/>
            <person name="McPherson J.D."/>
            <person name="Mardis E.R."/>
            <person name="Clifton S.W."/>
            <person name="Warren W.C."/>
            <person name="Chinwalla A.T."/>
            <person name="Eddy S.R."/>
            <person name="Marra M.A."/>
            <person name="Ovcharenko I."/>
            <person name="Furey T.S."/>
            <person name="Miller W."/>
            <person name="Eichler E.E."/>
            <person name="Bork P."/>
            <person name="Suyama M."/>
            <person name="Torrents D."/>
            <person name="Waterston R.H."/>
            <person name="Wilson R.K."/>
        </authorList>
    </citation>
    <scope>NUCLEOTIDE SEQUENCE [LARGE SCALE GENOMIC DNA]</scope>
</reference>
<reference key="7">
    <citation type="submission" date="2005-07" db="EMBL/GenBank/DDBJ databases">
        <authorList>
            <person name="Mural R.J."/>
            <person name="Istrail S."/>
            <person name="Sutton G.G."/>
            <person name="Florea L."/>
            <person name="Halpern A.L."/>
            <person name="Mobarry C.M."/>
            <person name="Lippert R."/>
            <person name="Walenz B."/>
            <person name="Shatkay H."/>
            <person name="Dew I."/>
            <person name="Miller J.R."/>
            <person name="Flanigan M.J."/>
            <person name="Edwards N.J."/>
            <person name="Bolanos R."/>
            <person name="Fasulo D."/>
            <person name="Halldorsson B.V."/>
            <person name="Hannenhalli S."/>
            <person name="Turner R."/>
            <person name="Yooseph S."/>
            <person name="Lu F."/>
            <person name="Nusskern D.R."/>
            <person name="Shue B.C."/>
            <person name="Zheng X.H."/>
            <person name="Zhong F."/>
            <person name="Delcher A.L."/>
            <person name="Huson D.H."/>
            <person name="Kravitz S.A."/>
            <person name="Mouchard L."/>
            <person name="Reinert K."/>
            <person name="Remington K.A."/>
            <person name="Clark A.G."/>
            <person name="Waterman M.S."/>
            <person name="Eichler E.E."/>
            <person name="Adams M.D."/>
            <person name="Hunkapiller M.W."/>
            <person name="Myers E.W."/>
            <person name="Venter J.C."/>
        </authorList>
    </citation>
    <scope>NUCLEOTIDE SEQUENCE [LARGE SCALE GENOMIC DNA]</scope>
</reference>
<reference key="8">
    <citation type="journal article" date="2004" name="Genome Res.">
        <title>The status, quality, and expansion of the NIH full-length cDNA project: the Mammalian Gene Collection (MGC).</title>
        <authorList>
            <consortium name="The MGC Project Team"/>
        </authorList>
    </citation>
    <scope>NUCLEOTIDE SEQUENCE [LARGE SCALE MRNA] (ISOFORM 1)</scope>
    <source>
        <tissue>Kidney</tissue>
        <tissue>Ovary</tissue>
    </source>
</reference>
<reference key="9">
    <citation type="submission" date="1998-08" db="EMBL/GenBank/DDBJ databases">
        <title>ADP-ribosylation factor-like protein LAK.</title>
        <authorList>
            <person name="Abe Y."/>
            <person name="Nezu K."/>
            <person name="Ueda N."/>
        </authorList>
    </citation>
    <scope>NUCLEOTIDE SEQUENCE [MRNA] OF 13-192 (ISOFORM 1)</scope>
</reference>
<reference key="10">
    <citation type="journal article" date="2007" name="Curr. Biol.">
        <title>The Arl4 family of small G proteins can recruit the cytohesin Arf6 exchange factors to the plasma membrane.</title>
        <authorList>
            <person name="Hofmann I."/>
            <person name="Thompson A."/>
            <person name="Sanderson C.M."/>
            <person name="Munro S."/>
        </authorList>
    </citation>
    <scope>FUNCTION</scope>
    <scope>INTERACTION WITH CYTH2</scope>
    <scope>SUBCELLULAR LOCATION</scope>
    <scope>MUTAGENESIS OF GLY-2 AND LYS-34</scope>
</reference>
<reference key="11">
    <citation type="journal article" date="2009" name="Biochem. Biophys. Res. Commun.">
        <title>ADP-ribosylation factor like 7 (ARL7) interacts with alpha-tubulin and modulates intracellular vesicular transport.</title>
        <authorList>
            <person name="Wei S.M."/>
            <person name="Xie C.G."/>
            <person name="Abe Y."/>
            <person name="Cai J.T."/>
        </authorList>
    </citation>
    <scope>FUNCTION</scope>
    <scope>INTERACTION WITH ALPHA TUBULIN</scope>
    <scope>MUTAGENESIS OF THR-27 AND GLN-72</scope>
    <scope>TISSUE SPECIFICITY</scope>
</reference>
<protein>
    <recommendedName>
        <fullName>ADP-ribosylation factor-like protein 4C</fullName>
    </recommendedName>
    <alternativeName>
        <fullName>ADP-ribosylation factor-like protein 7</fullName>
    </alternativeName>
    <alternativeName>
        <fullName>ADP-ribosylation factor-like protein LAK</fullName>
    </alternativeName>
</protein>
<keyword id="KW-0025">Alternative splicing</keyword>
<keyword id="KW-1003">Cell membrane</keyword>
<keyword id="KW-0966">Cell projection</keyword>
<keyword id="KW-0963">Cytoplasm</keyword>
<keyword id="KW-0342">GTP-binding</keyword>
<keyword id="KW-0449">Lipoprotein</keyword>
<keyword id="KW-0472">Membrane</keyword>
<keyword id="KW-0519">Myristate</keyword>
<keyword id="KW-0547">Nucleotide-binding</keyword>
<keyword id="KW-1267">Proteomics identification</keyword>
<keyword id="KW-1185">Reference proteome</keyword>
<keyword id="KW-0813">Transport</keyword>
<gene>
    <name type="primary">ARL4C</name>
    <name type="synonym">ARL7</name>
</gene>
<organism>
    <name type="scientific">Homo sapiens</name>
    <name type="common">Human</name>
    <dbReference type="NCBI Taxonomy" id="9606"/>
    <lineage>
        <taxon>Eukaryota</taxon>
        <taxon>Metazoa</taxon>
        <taxon>Chordata</taxon>
        <taxon>Craniata</taxon>
        <taxon>Vertebrata</taxon>
        <taxon>Euteleostomi</taxon>
        <taxon>Mammalia</taxon>
        <taxon>Eutheria</taxon>
        <taxon>Euarchontoglires</taxon>
        <taxon>Primates</taxon>
        <taxon>Haplorrhini</taxon>
        <taxon>Catarrhini</taxon>
        <taxon>Hominidae</taxon>
        <taxon>Homo</taxon>
    </lineage>
</organism>
<name>ARL4C_HUMAN</name>
<dbReference type="EMBL" id="Y17804">
    <property type="protein sequence ID" value="CAB44355.1"/>
    <property type="molecule type" value="mRNA"/>
</dbReference>
<dbReference type="EMBL" id="AJ579850">
    <property type="protein sequence ID" value="CAE30322.1"/>
    <property type="molecule type" value="mRNA"/>
</dbReference>
<dbReference type="EMBL" id="AJ579851">
    <property type="protein sequence ID" value="CAE30323.1"/>
    <property type="molecule type" value="mRNA"/>
</dbReference>
<dbReference type="EMBL" id="AF493892">
    <property type="protein sequence ID" value="AAM12606.1"/>
    <property type="molecule type" value="mRNA"/>
</dbReference>
<dbReference type="EMBL" id="BT019378">
    <property type="protein sequence ID" value="AAV38185.1"/>
    <property type="molecule type" value="mRNA"/>
</dbReference>
<dbReference type="EMBL" id="BT019379">
    <property type="protein sequence ID" value="AAV38186.1"/>
    <property type="molecule type" value="mRNA"/>
</dbReference>
<dbReference type="EMBL" id="AK314119">
    <property type="protein sequence ID" value="BAG36810.1"/>
    <property type="molecule type" value="mRNA"/>
</dbReference>
<dbReference type="EMBL" id="AC105145">
    <property type="status" value="NOT_ANNOTATED_CDS"/>
    <property type="molecule type" value="Genomic_DNA"/>
</dbReference>
<dbReference type="EMBL" id="AC097713">
    <property type="protein sequence ID" value="AAX93114.1"/>
    <property type="molecule type" value="Genomic_DNA"/>
</dbReference>
<dbReference type="EMBL" id="CH471063">
    <property type="protein sequence ID" value="EAW71073.1"/>
    <property type="molecule type" value="Genomic_DNA"/>
</dbReference>
<dbReference type="EMBL" id="BC001051">
    <property type="status" value="NOT_ANNOTATED_CDS"/>
    <property type="molecule type" value="mRNA"/>
</dbReference>
<dbReference type="EMBL" id="BC089043">
    <property type="protein sequence ID" value="AAH89043.1"/>
    <property type="molecule type" value="mRNA"/>
</dbReference>
<dbReference type="EMBL" id="AB016811">
    <property type="protein sequence ID" value="BAA75473.1"/>
    <property type="status" value="ALT_INIT"/>
    <property type="molecule type" value="mRNA"/>
</dbReference>
<dbReference type="CCDS" id="CCDS2512.1">
    <molecule id="P56559-1"/>
</dbReference>
<dbReference type="CCDS" id="CCDS63169.1">
    <molecule id="P56559-2"/>
</dbReference>
<dbReference type="RefSeq" id="NP_001269360.1">
    <molecule id="P56559-2"/>
    <property type="nucleotide sequence ID" value="NM_001282431.2"/>
</dbReference>
<dbReference type="RefSeq" id="NP_005728.2">
    <molecule id="P56559-1"/>
    <property type="nucleotide sequence ID" value="NM_005737.3"/>
</dbReference>
<dbReference type="SMR" id="P56559"/>
<dbReference type="BioGRID" id="115427">
    <property type="interactions" value="137"/>
</dbReference>
<dbReference type="ELM" id="P56559"/>
<dbReference type="FunCoup" id="P56559">
    <property type="interactions" value="1921"/>
</dbReference>
<dbReference type="IntAct" id="P56559">
    <property type="interactions" value="32"/>
</dbReference>
<dbReference type="STRING" id="9606.ENSP00000339754"/>
<dbReference type="iPTMnet" id="P56559"/>
<dbReference type="PhosphoSitePlus" id="P56559"/>
<dbReference type="BioMuta" id="ARL4C"/>
<dbReference type="DMDM" id="3913085"/>
<dbReference type="jPOST" id="P56559"/>
<dbReference type="MassIVE" id="P56559"/>
<dbReference type="PaxDb" id="9606-ENSP00000339754"/>
<dbReference type="PeptideAtlas" id="P56559"/>
<dbReference type="ProteomicsDB" id="56928">
    <molecule id="P56559-1"/>
</dbReference>
<dbReference type="Pumba" id="P56559"/>
<dbReference type="Antibodypedia" id="34460">
    <property type="antibodies" value="91 antibodies from 21 providers"/>
</dbReference>
<dbReference type="DNASU" id="10123"/>
<dbReference type="Ensembl" id="ENST00000339728.6">
    <molecule id="P56559-2"/>
    <property type="protein sequence ID" value="ENSP00000339754.3"/>
    <property type="gene ID" value="ENSG00000188042.8"/>
</dbReference>
<dbReference type="Ensembl" id="ENST00000390645.2">
    <molecule id="P56559-1"/>
    <property type="protein sequence ID" value="ENSP00000375057.2"/>
    <property type="gene ID" value="ENSG00000188042.8"/>
</dbReference>
<dbReference type="GeneID" id="10123"/>
<dbReference type="KEGG" id="hsa:10123"/>
<dbReference type="MANE-Select" id="ENST00000339728.6">
    <molecule id="P56559-2"/>
    <property type="protein sequence ID" value="ENSP00000339754.3"/>
    <property type="RefSeq nucleotide sequence ID" value="NM_001282431.2"/>
    <property type="RefSeq protein sequence ID" value="NP_001269360.1"/>
</dbReference>
<dbReference type="UCSC" id="uc002vvm.6">
    <molecule id="P56559-1"/>
    <property type="organism name" value="human"/>
</dbReference>
<dbReference type="AGR" id="HGNC:698"/>
<dbReference type="CTD" id="10123"/>
<dbReference type="DisGeNET" id="10123"/>
<dbReference type="GeneCards" id="ARL4C"/>
<dbReference type="HGNC" id="HGNC:698">
    <property type="gene designation" value="ARL4C"/>
</dbReference>
<dbReference type="HPA" id="ENSG00000188042">
    <property type="expression patterns" value="Tissue enhanced (bone marrow, lymphoid tissue)"/>
</dbReference>
<dbReference type="MIM" id="604787">
    <property type="type" value="gene"/>
</dbReference>
<dbReference type="neXtProt" id="NX_P56559"/>
<dbReference type="OpenTargets" id="ENSG00000188042"/>
<dbReference type="PharmGKB" id="PA24991"/>
<dbReference type="VEuPathDB" id="HostDB:ENSG00000188042"/>
<dbReference type="eggNOG" id="KOG0070">
    <property type="taxonomic scope" value="Eukaryota"/>
</dbReference>
<dbReference type="GeneTree" id="ENSGT00940000160639"/>
<dbReference type="HOGENOM" id="CLU_040729_9_2_1"/>
<dbReference type="InParanoid" id="P56559"/>
<dbReference type="OMA" id="IRILWIN"/>
<dbReference type="OrthoDB" id="2011769at2759"/>
<dbReference type="PAN-GO" id="P56559">
    <property type="GO annotations" value="5 GO annotations based on evolutionary models"/>
</dbReference>
<dbReference type="PhylomeDB" id="P56559"/>
<dbReference type="TreeFam" id="TF105464"/>
<dbReference type="PathwayCommons" id="P56559"/>
<dbReference type="Reactome" id="R-HSA-9029569">
    <property type="pathway name" value="NR1H3 &amp; NR1H2 regulate gene expression linked to cholesterol transport and efflux"/>
</dbReference>
<dbReference type="SignaLink" id="P56559"/>
<dbReference type="BioGRID-ORCS" id="10123">
    <property type="hits" value="18 hits in 1151 CRISPR screens"/>
</dbReference>
<dbReference type="ChiTaRS" id="ARL4C">
    <property type="organism name" value="human"/>
</dbReference>
<dbReference type="GenomeRNAi" id="10123"/>
<dbReference type="Pharos" id="P56559">
    <property type="development level" value="Tbio"/>
</dbReference>
<dbReference type="PRO" id="PR:P56559"/>
<dbReference type="Proteomes" id="UP000005640">
    <property type="component" value="Chromosome 2"/>
</dbReference>
<dbReference type="RNAct" id="P56559">
    <property type="molecule type" value="protein"/>
</dbReference>
<dbReference type="Bgee" id="ENSG00000188042">
    <property type="expression patterns" value="Expressed in pons and 198 other cell types or tissues"/>
</dbReference>
<dbReference type="ExpressionAtlas" id="P56559">
    <property type="expression patterns" value="baseline and differential"/>
</dbReference>
<dbReference type="GO" id="GO:0005737">
    <property type="term" value="C:cytoplasm"/>
    <property type="evidence" value="ECO:0000314"/>
    <property type="project" value="UniProtKB"/>
</dbReference>
<dbReference type="GO" id="GO:0005829">
    <property type="term" value="C:cytosol"/>
    <property type="evidence" value="ECO:0000314"/>
    <property type="project" value="HPA"/>
</dbReference>
<dbReference type="GO" id="GO:0030175">
    <property type="term" value="C:filopodium"/>
    <property type="evidence" value="ECO:0007669"/>
    <property type="project" value="UniProtKB-SubCell"/>
</dbReference>
<dbReference type="GO" id="GO:0005739">
    <property type="term" value="C:mitochondrion"/>
    <property type="evidence" value="ECO:0006056"/>
    <property type="project" value="FlyBase"/>
</dbReference>
<dbReference type="GO" id="GO:0005634">
    <property type="term" value="C:nucleus"/>
    <property type="evidence" value="ECO:0000304"/>
    <property type="project" value="ProtInc"/>
</dbReference>
<dbReference type="GO" id="GO:0005886">
    <property type="term" value="C:plasma membrane"/>
    <property type="evidence" value="ECO:0000314"/>
    <property type="project" value="HPA"/>
</dbReference>
<dbReference type="GO" id="GO:0043014">
    <property type="term" value="F:alpha-tubulin binding"/>
    <property type="evidence" value="ECO:0000314"/>
    <property type="project" value="UniProtKB"/>
</dbReference>
<dbReference type="GO" id="GO:0005525">
    <property type="term" value="F:GTP binding"/>
    <property type="evidence" value="ECO:0000318"/>
    <property type="project" value="GO_Central"/>
</dbReference>
<dbReference type="GO" id="GO:0003924">
    <property type="term" value="F:GTPase activity"/>
    <property type="evidence" value="ECO:0000304"/>
    <property type="project" value="ProtInc"/>
</dbReference>
<dbReference type="GO" id="GO:0032456">
    <property type="term" value="P:endocytic recycling"/>
    <property type="evidence" value="ECO:0000314"/>
    <property type="project" value="UniProtKB"/>
</dbReference>
<dbReference type="GO" id="GO:0006886">
    <property type="term" value="P:intracellular protein transport"/>
    <property type="evidence" value="ECO:0000318"/>
    <property type="project" value="GO_Central"/>
</dbReference>
<dbReference type="CDD" id="cd04152">
    <property type="entry name" value="Arl4_Arl7"/>
    <property type="match status" value="1"/>
</dbReference>
<dbReference type="FunFam" id="3.40.50.300:FF:000458">
    <property type="entry name" value="ADP-ribosylation factor-like protein 4C"/>
    <property type="match status" value="1"/>
</dbReference>
<dbReference type="Gene3D" id="3.40.50.300">
    <property type="entry name" value="P-loop containing nucleotide triphosphate hydrolases"/>
    <property type="match status" value="1"/>
</dbReference>
<dbReference type="InterPro" id="IPR027417">
    <property type="entry name" value="P-loop_NTPase"/>
</dbReference>
<dbReference type="InterPro" id="IPR005225">
    <property type="entry name" value="Small_GTP-bd"/>
</dbReference>
<dbReference type="InterPro" id="IPR024156">
    <property type="entry name" value="Small_GTPase_ARF"/>
</dbReference>
<dbReference type="InterPro" id="IPR006689">
    <property type="entry name" value="Small_GTPase_ARF/SAR"/>
</dbReference>
<dbReference type="NCBIfam" id="TIGR00231">
    <property type="entry name" value="small_GTP"/>
    <property type="match status" value="1"/>
</dbReference>
<dbReference type="PANTHER" id="PTHR11711">
    <property type="entry name" value="ADP RIBOSYLATION FACTOR-RELATED"/>
    <property type="match status" value="1"/>
</dbReference>
<dbReference type="Pfam" id="PF00025">
    <property type="entry name" value="Arf"/>
    <property type="match status" value="1"/>
</dbReference>
<dbReference type="PRINTS" id="PR00328">
    <property type="entry name" value="SAR1GTPBP"/>
</dbReference>
<dbReference type="SMART" id="SM00177">
    <property type="entry name" value="ARF"/>
    <property type="match status" value="1"/>
</dbReference>
<dbReference type="SMART" id="SM00175">
    <property type="entry name" value="RAB"/>
    <property type="match status" value="1"/>
</dbReference>
<dbReference type="SMART" id="SM00178">
    <property type="entry name" value="SAR"/>
    <property type="match status" value="1"/>
</dbReference>
<dbReference type="SUPFAM" id="SSF52540">
    <property type="entry name" value="P-loop containing nucleoside triphosphate hydrolases"/>
    <property type="match status" value="1"/>
</dbReference>
<dbReference type="PROSITE" id="PS51417">
    <property type="entry name" value="ARF"/>
    <property type="match status" value="1"/>
</dbReference>
<proteinExistence type="evidence at protein level"/>